<sequence>MRHCGWLLGLLSLFSLATHASDWQEIKNEAKGQTVWFNAWGGDTAINRYLDWVSGEMKTHYAINLKIVRLADAADAVKRIQTEAAAGRKTGGSVDLLWVNGENFRTLKEANLLQTGWAETLPNWRYVDTQLPVREDFSVPTQGAESPWGGAQLTFIARRDVTPQPPQTPQALLEFAKANPGTVTYPRPPDFTGTAFLEQLLIMLTPDPAALKEAPDDATFARVTAPLWQYLDVLHPYLWREGKDFPPSPARMDALLKAGTLRLSLTFNPAHAQQKIASGDLPASSYSFGFREGMIGNVHFVTIPANANASAAAKVVANFLLSPDAQLRKADPAVWGDPSVLDPQKLPDGQRESLQSRMPQDLPPVLAEPHAGWVNALEQEWLHRYGTH</sequence>
<keyword id="KW-1185">Reference proteome</keyword>
<organism>
    <name type="scientific">Escherichia coli (strain K12)</name>
    <dbReference type="NCBI Taxonomy" id="83333"/>
    <lineage>
        <taxon>Bacteria</taxon>
        <taxon>Pseudomonadati</taxon>
        <taxon>Pseudomonadota</taxon>
        <taxon>Gammaproteobacteria</taxon>
        <taxon>Enterobacterales</taxon>
        <taxon>Enterobacteriaceae</taxon>
        <taxon>Escherichia</taxon>
    </lineage>
</organism>
<reference key="1">
    <citation type="journal article" date="1997" name="Science">
        <title>The complete genome sequence of Escherichia coli K-12.</title>
        <authorList>
            <person name="Blattner F.R."/>
            <person name="Plunkett G. III"/>
            <person name="Bloch C.A."/>
            <person name="Perna N.T."/>
            <person name="Burland V."/>
            <person name="Riley M."/>
            <person name="Collado-Vides J."/>
            <person name="Glasner J.D."/>
            <person name="Rode C.K."/>
            <person name="Mayhew G.F."/>
            <person name="Gregor J."/>
            <person name="Davis N.W."/>
            <person name="Kirkpatrick H.A."/>
            <person name="Goeden M.A."/>
            <person name="Rose D.J."/>
            <person name="Mau B."/>
            <person name="Shao Y."/>
        </authorList>
    </citation>
    <scope>NUCLEOTIDE SEQUENCE [LARGE SCALE GENOMIC DNA]</scope>
    <source>
        <strain>K12 / MG1655 / ATCC 47076</strain>
    </source>
</reference>
<reference key="2">
    <citation type="journal article" date="2006" name="Mol. Syst. Biol.">
        <title>Highly accurate genome sequences of Escherichia coli K-12 strains MG1655 and W3110.</title>
        <authorList>
            <person name="Hayashi K."/>
            <person name="Morooka N."/>
            <person name="Yamamoto Y."/>
            <person name="Fujita K."/>
            <person name="Isono K."/>
            <person name="Choi S."/>
            <person name="Ohtsubo E."/>
            <person name="Baba T."/>
            <person name="Wanner B.L."/>
            <person name="Mori H."/>
            <person name="Horiuchi T."/>
        </authorList>
    </citation>
    <scope>NUCLEOTIDE SEQUENCE [LARGE SCALE GENOMIC DNA]</scope>
    <source>
        <strain>K12 / W3110 / ATCC 27325 / DSM 5911</strain>
    </source>
</reference>
<reference key="3">
    <citation type="journal article" date="2000" name="Eur. J. Biochem.">
        <title>Proteomic analysis of the Escherichia coli outer membrane.</title>
        <authorList>
            <person name="Molloy M.P."/>
            <person name="Herbert B.R."/>
            <person name="Slade M.B."/>
            <person name="Rabilloud T."/>
            <person name="Nouwens A.S."/>
            <person name="Williams K.L."/>
            <person name="Gooley A.A."/>
        </authorList>
    </citation>
    <scope>IDENTIFICATION BY MASS SPECTROMETRY</scope>
</reference>
<protein>
    <recommendedName>
        <fullName>Protein YnjB</fullName>
    </recommendedName>
</protein>
<accession>P76223</accession>
<accession>Q2MB35</accession>
<dbReference type="EMBL" id="U00096">
    <property type="protein sequence ID" value="AAC74824.2"/>
    <property type="molecule type" value="Genomic_DNA"/>
</dbReference>
<dbReference type="EMBL" id="AP009048">
    <property type="protein sequence ID" value="BAE76521.1"/>
    <property type="molecule type" value="Genomic_DNA"/>
</dbReference>
<dbReference type="PIR" id="B64935">
    <property type="entry name" value="B64935"/>
</dbReference>
<dbReference type="RefSeq" id="NP_416268.2">
    <property type="nucleotide sequence ID" value="NC_000913.3"/>
</dbReference>
<dbReference type="RefSeq" id="WP_001215339.1">
    <property type="nucleotide sequence ID" value="NZ_SSZK01000001.1"/>
</dbReference>
<dbReference type="BioGRID" id="4262125">
    <property type="interactions" value="26"/>
</dbReference>
<dbReference type="ComplexPortal" id="CPX-4465">
    <property type="entry name" value="YnjBCD ABC transporter complex"/>
</dbReference>
<dbReference type="DIP" id="DIP-12779N"/>
<dbReference type="FunCoup" id="P76223">
    <property type="interactions" value="13"/>
</dbReference>
<dbReference type="IntAct" id="P76223">
    <property type="interactions" value="5"/>
</dbReference>
<dbReference type="STRING" id="511145.b1754"/>
<dbReference type="jPOST" id="P76223"/>
<dbReference type="PaxDb" id="511145-b1754"/>
<dbReference type="EnsemblBacteria" id="AAC74824">
    <property type="protein sequence ID" value="AAC74824"/>
    <property type="gene ID" value="b1754"/>
</dbReference>
<dbReference type="GeneID" id="946271"/>
<dbReference type="KEGG" id="ecj:JW5284"/>
<dbReference type="KEGG" id="eco:b1754"/>
<dbReference type="KEGG" id="ecoc:C3026_10015"/>
<dbReference type="PATRIC" id="fig|511145.12.peg.1827"/>
<dbReference type="EchoBASE" id="EB3760"/>
<dbReference type="eggNOG" id="COG4134">
    <property type="taxonomic scope" value="Bacteria"/>
</dbReference>
<dbReference type="HOGENOM" id="CLU_045122_0_0_6"/>
<dbReference type="InParanoid" id="P76223"/>
<dbReference type="OMA" id="YPRPPEF"/>
<dbReference type="OrthoDB" id="3239593at2"/>
<dbReference type="PhylomeDB" id="P76223"/>
<dbReference type="BioCyc" id="EcoCyc:G6949-MONOMER"/>
<dbReference type="PRO" id="PR:P76223"/>
<dbReference type="Proteomes" id="UP000000625">
    <property type="component" value="Chromosome"/>
</dbReference>
<dbReference type="GO" id="GO:0055052">
    <property type="term" value="C:ATP-binding cassette (ABC) transporter complex, substrate-binding subunit-containing"/>
    <property type="evidence" value="ECO:0000303"/>
    <property type="project" value="ComplexPortal"/>
</dbReference>
<dbReference type="GO" id="GO:0016020">
    <property type="term" value="C:membrane"/>
    <property type="evidence" value="ECO:0000303"/>
    <property type="project" value="ComplexPortal"/>
</dbReference>
<dbReference type="GO" id="GO:0030288">
    <property type="term" value="C:outer membrane-bounded periplasmic space"/>
    <property type="evidence" value="ECO:0007669"/>
    <property type="project" value="UniProtKB-ARBA"/>
</dbReference>
<dbReference type="GO" id="GO:0055085">
    <property type="term" value="P:transmembrane transport"/>
    <property type="evidence" value="ECO:0000303"/>
    <property type="project" value="ComplexPortal"/>
</dbReference>
<dbReference type="Gene3D" id="3.40.190.10">
    <property type="entry name" value="Periplasmic binding protein-like II"/>
    <property type="match status" value="2"/>
</dbReference>
<dbReference type="InterPro" id="IPR006059">
    <property type="entry name" value="SBP"/>
</dbReference>
<dbReference type="InterPro" id="IPR027020">
    <property type="entry name" value="YnjB"/>
</dbReference>
<dbReference type="NCBIfam" id="NF008633">
    <property type="entry name" value="PRK11622.1"/>
    <property type="match status" value="1"/>
</dbReference>
<dbReference type="PANTHER" id="PTHR42779">
    <property type="entry name" value="PROTEIN YNJB"/>
    <property type="match status" value="1"/>
</dbReference>
<dbReference type="PANTHER" id="PTHR42779:SF1">
    <property type="entry name" value="PROTEIN YNJB"/>
    <property type="match status" value="1"/>
</dbReference>
<dbReference type="Pfam" id="PF13416">
    <property type="entry name" value="SBP_bac_8"/>
    <property type="match status" value="1"/>
</dbReference>
<dbReference type="PIRSF" id="PIRSF029172">
    <property type="entry name" value="UCP029172_ABC_sbc_YnjB"/>
    <property type="match status" value="1"/>
</dbReference>
<dbReference type="SUPFAM" id="SSF53850">
    <property type="entry name" value="Periplasmic binding protein-like II"/>
    <property type="match status" value="1"/>
</dbReference>
<name>YNJB_ECOLI</name>
<proteinExistence type="evidence at protein level"/>
<evidence type="ECO:0000256" key="1">
    <source>
        <dbReference type="SAM" id="MobiDB-lite"/>
    </source>
</evidence>
<feature type="chain" id="PRO_0000169008" description="Protein YnjB">
    <location>
        <begin position="1"/>
        <end position="388"/>
    </location>
</feature>
<feature type="region of interest" description="Disordered" evidence="1">
    <location>
        <begin position="333"/>
        <end position="357"/>
    </location>
</feature>
<gene>
    <name type="primary">ynjB</name>
    <name type="ordered locus">b1754</name>
    <name type="ordered locus">JW5284</name>
</gene>